<accession>Q8BCV4</accession>
<feature type="chain" id="PRO_0000391503" description="Uncharacterized 10.6 kDa protein">
    <location>
        <begin position="1"/>
        <end position="100"/>
    </location>
</feature>
<protein>
    <recommendedName>
        <fullName>Uncharacterized 10.6 kDa protein</fullName>
    </recommendedName>
</protein>
<name>VG11_MILVL</name>
<dbReference type="EMBL" id="AF525936">
    <property type="protein sequence ID" value="AAN60452.1"/>
    <property type="molecule type" value="Genomic_RNA"/>
</dbReference>
<dbReference type="Proteomes" id="UP000887520">
    <property type="component" value="Genome"/>
</dbReference>
<sequence length="100" mass="10749">MKPEKKRILTTGEIDNSCFNKKSGGARTTVNGSPTDEKAFKVVSTLAGCQRLLRISHILLRHVEVDTRTYFLFSTLVAAGGRTLPSGGRGQGSKLTGEAI</sequence>
<reference key="1">
    <citation type="journal article" date="2002" name="J. Gen. Virol.">
        <title>Nucleotide sequence and genomic organization of an ophiovirus associated with lettuce big-vein disease.</title>
        <authorList>
            <person name="Van Der Wilk F."/>
            <person name="Dullemans A.M."/>
            <person name="Verbeek M."/>
            <person name="Van Den Heuvel J.F.J.M."/>
        </authorList>
    </citation>
    <scope>NUCLEOTIDE SEQUENCE [GENOMIC RNA]</scope>
</reference>
<proteinExistence type="predicted"/>
<organismHost>
    <name type="scientific">Lactuca sativa</name>
    <name type="common">Garden lettuce</name>
    <dbReference type="NCBI Taxonomy" id="4236"/>
</organismHost>
<organism>
    <name type="scientific">Mirafiori lettuce virus (isolate Lettuce/Netherlands/LS301-O)</name>
    <name type="common">MiLV</name>
    <name type="synonym">Mirafiori lettuce big-vein virus</name>
    <dbReference type="NCBI Taxonomy" id="652964"/>
    <lineage>
        <taxon>Viruses</taxon>
        <taxon>Riboviria</taxon>
        <taxon>Orthornavirae</taxon>
        <taxon>Negarnaviricota</taxon>
        <taxon>Haploviricotina</taxon>
        <taxon>Milneviricetes</taxon>
        <taxon>Serpentovirales</taxon>
        <taxon>Aspiviridae</taxon>
        <taxon>Ophiovirus</taxon>
        <taxon>Ophiovirus mirafioriense</taxon>
    </lineage>
</organism>